<geneLocation type="plasmid" evidence="7">
    <name>pCTX25</name>
</geneLocation>
<evidence type="ECO:0000250" key="1">
    <source>
        <dbReference type="UniProtKB" id="A0A5R8T042"/>
    </source>
</evidence>
<evidence type="ECO:0000250" key="2">
    <source>
        <dbReference type="UniProtKB" id="P9WKD3"/>
    </source>
</evidence>
<evidence type="ECO:0000255" key="3"/>
<evidence type="ECO:0000255" key="4">
    <source>
        <dbReference type="PROSITE-ProRule" id="PRU10101"/>
    </source>
</evidence>
<evidence type="ECO:0000269" key="5">
    <source>
    </source>
</evidence>
<evidence type="ECO:0000269" key="6">
    <source>
    </source>
</evidence>
<evidence type="ECO:0000303" key="7">
    <source>
    </source>
</evidence>
<evidence type="ECO:0000305" key="8"/>
<evidence type="ECO:0000312" key="9">
    <source>
        <dbReference type="EMBL" id="AAM70498.1"/>
    </source>
</evidence>
<reference evidence="9" key="1">
    <citation type="journal article" date="2004" name="Antimicrob. Agents Chemother.">
        <title>Molecular and kinetic comparison of the novel extended-spectrum beta-lactamases CTX-M-25 and CTX-M-26.</title>
        <authorList>
            <person name="Munday C.J."/>
            <person name="Boyd D.A."/>
            <person name="Brenwald N."/>
            <person name="Miller M."/>
            <person name="Andrews J.M."/>
            <person name="Wise R."/>
            <person name="Mulvey M.R."/>
            <person name="Hawkey P.M."/>
        </authorList>
    </citation>
    <scope>NUCLEOTIDE SEQUENCE [GENOMIC DNA]</scope>
    <scope>FUNCTION</scope>
    <scope>CATALYTIC ACTIVITY</scope>
    <scope>ACTIVITY REGULATION</scope>
    <scope>BIOPHYSICOCHEMICAL PROPERTIES</scope>
    <source>
        <strain evidence="7">ESBL530</strain>
        <plasmid evidence="7">pCTX25</plasmid>
    </source>
</reference>
<reference evidence="8" key="2">
    <citation type="journal article" date="1991" name="Biochem. J.">
        <title>A standard numbering scheme for the class A beta-lactamases.</title>
        <authorList>
            <person name="Ambler R.P."/>
            <person name="Coulson A.F."/>
            <person name="Frere J.M."/>
            <person name="Ghuysen J.M."/>
            <person name="Joris B."/>
            <person name="Forsman M."/>
            <person name="Levesque R.C."/>
            <person name="Tiraby G."/>
            <person name="Waley S.G."/>
        </authorList>
    </citation>
    <scope>NOMENCLATURE</scope>
</reference>
<name>BLC25_ECOLX</name>
<keyword id="KW-0046">Antibiotic resistance</keyword>
<keyword id="KW-0378">Hydrolase</keyword>
<keyword id="KW-0614">Plasmid</keyword>
<keyword id="KW-0964">Secreted</keyword>
<keyword id="KW-0732">Signal</keyword>
<feature type="signal peptide" evidence="3">
    <location>
        <begin position="1"/>
        <end position="30"/>
    </location>
</feature>
<feature type="chain" id="PRO_5004310632" description="Beta-lactamase CTX-M-25" evidence="3">
    <location>
        <begin position="31"/>
        <end position="291"/>
    </location>
</feature>
<feature type="active site" description="Nucleophile; acyl-ester intermediate" evidence="1 4">
    <location>
        <position position="73"/>
    </location>
</feature>
<feature type="binding site" evidence="1">
    <location>
        <position position="76"/>
    </location>
    <ligand>
        <name>a beta-lactam</name>
        <dbReference type="ChEBI" id="CHEBI:35627"/>
    </ligand>
</feature>
<feature type="binding site" evidence="1">
    <location>
        <position position="133"/>
    </location>
    <ligand>
        <name>a beta-lactam</name>
        <dbReference type="ChEBI" id="CHEBI:35627"/>
    </ligand>
</feature>
<feature type="binding site" evidence="1">
    <location>
        <position position="169"/>
    </location>
    <ligand>
        <name>a beta-lactam</name>
        <dbReference type="ChEBI" id="CHEBI:35627"/>
    </ligand>
</feature>
<feature type="binding site" evidence="1">
    <location>
        <position position="240"/>
    </location>
    <ligand>
        <name>a beta-lactam</name>
        <dbReference type="ChEBI" id="CHEBI:35627"/>
    </ligand>
</feature>
<gene>
    <name evidence="7" type="primary">bla</name>
    <name evidence="9" type="synonym">blactx-m-25</name>
</gene>
<comment type="function">
    <text evidence="5">Extended-spectrum beta-lactamase (ESBL) which confers resistance to penicillins, as well as first, second and third-generation cephalosporins (PubMed:15561863). Has cefotaxime-hydrolyzing activity (PubMed:15561863). Inactive against cephalosporin antibiotic, cefoxitin, and the carbapenem, imipenem (PubMed:15561863).</text>
</comment>
<comment type="catalytic activity">
    <reaction evidence="5">
        <text>a beta-lactam + H2O = a substituted beta-amino acid</text>
        <dbReference type="Rhea" id="RHEA:20401"/>
        <dbReference type="ChEBI" id="CHEBI:15377"/>
        <dbReference type="ChEBI" id="CHEBI:35627"/>
        <dbReference type="ChEBI" id="CHEBI:140347"/>
        <dbReference type="EC" id="3.5.2.6"/>
    </reaction>
</comment>
<comment type="activity regulation">
    <text evidence="5">Inhibited by the beta-lactamase-blocking agents clavulanic acid and tazobactam; in the DH10B strain.</text>
</comment>
<comment type="biophysicochemical properties">
    <kinetics>
        <KM evidence="5">7.7 uM for ampicillin (at pH 7.0 and 37 degrees Celsius)</KM>
        <KM evidence="5">74 uM for benzylpenicillin (at pH 7.0 and 37 degrees Celsius)</KM>
        <KM evidence="5">2.3 uM for ticarcillin (at pH 7.0 and 37 degrees Celsius)</KM>
        <KM evidence="5">190 uM for cefalotin (at pH 7.0 and 37 degrees Celsius)</KM>
        <KM evidence="5">44 uM for cefuroxime (at pH 7.0 and 37 degrees Celsius)</KM>
        <KM evidence="5">13 uM for ceftazidime (at pH 7.0 and 37 degrees Celsius)</KM>
        <KM evidence="5">28 uM for cefotaxime (at pH 7.0 and 37 degrees Celsius)</KM>
        <KM evidence="5">120 uM for aztreonam (at pH 7.0 and 37 degrees Celsius)</KM>
        <text evidence="5">kcat is 5.9 sec(-1) with ampicillin as substrate (at pH 7.0 and 37 degrees Celsius) (PubMed:15561863). kcat is 33 sec(-1) with benzylpenicillin as substrate (at pH 7.0 and 37 degrees Celsius) (PubMed:15561863). kcat is 8.2 sec(-1) with ticarcillin as substrate (at pH 7.0 and 37 degrees Celsius) (PubMed:15561863). kcat is 230 sec(-1) with cefalotin as substrate (at pH 7.0 and 37 degrees Celsius) (PubMed:15561863). kcat is 190 sec(-1) with cefuroxime as substrate (at pH 7.0 and 37 degrees Celsius) (PubMed:15561863). kcat is 33 sec(-1) with ceftazidime as substrate (at pH 7.0 and 37 degrees Celsius) (PubMed:15561863). kcat is 101 sec(-1) with cefotaxime as substrate (at pH 7.0 and 37 degrees Celsius) (PubMed:15561863). kcat is 84 sec(-1) with aztreonam as substrate (at pH 7.0 and 37 degrees Celsius) (PubMed:15561863).</text>
    </kinetics>
</comment>
<comment type="subunit">
    <text evidence="2">Monomer.</text>
</comment>
<comment type="subcellular location">
    <subcellularLocation>
        <location evidence="1">Secreted</location>
    </subcellularLocation>
</comment>
<comment type="miscellaneous">
    <text evidence="6">The class A beta-lactamase family has a specific amino-acid numbering system, sometimes called Ambler or ABL numbering and often misspelt as Amber (PubMed:2039479). A multiple sequence alignment was used to derive a consensus sequence and then the consensus was numbered taking into account insertions and deletions (PubMed:2039479). This allows use of identical numbers, e.g. for active site residues, despite differences in protein length (PubMed:2039479). UniProt always uses natural numbering of residues, hence there appear to be differences in numbering between this entry and some papers (PubMed:2039479).</text>
</comment>
<comment type="similarity">
    <text evidence="8">Belongs to the class-A beta-lactamase family.</text>
</comment>
<protein>
    <recommendedName>
        <fullName evidence="7">Beta-lactamase CTX-M-25</fullName>
        <ecNumber evidence="5">3.5.2.6</ecNumber>
    </recommendedName>
    <alternativeName>
        <fullName evidence="8">Cefotaximase 25</fullName>
    </alternativeName>
</protein>
<dbReference type="EC" id="3.5.2.6" evidence="5"/>
<dbReference type="EMBL" id="AF518567">
    <property type="protein sequence ID" value="AAM70498.1"/>
    <property type="molecule type" value="Genomic_DNA"/>
</dbReference>
<dbReference type="SMR" id="Q8KSA6"/>
<dbReference type="CARD" id="ARO:3001887">
    <property type="molecule name" value="CTX-M-25"/>
    <property type="mechanism identifier" value="ARO:0001004"/>
    <property type="mechanism name" value="antibiotic inactivation"/>
</dbReference>
<dbReference type="KEGG" id="ag:AAM70498"/>
<dbReference type="BRENDA" id="3.5.2.6">
    <property type="organism ID" value="2026"/>
</dbReference>
<dbReference type="SABIO-RK" id="Q8KSA6"/>
<dbReference type="GO" id="GO:0005576">
    <property type="term" value="C:extracellular region"/>
    <property type="evidence" value="ECO:0007669"/>
    <property type="project" value="UniProtKB-SubCell"/>
</dbReference>
<dbReference type="GO" id="GO:0008800">
    <property type="term" value="F:beta-lactamase activity"/>
    <property type="evidence" value="ECO:0007669"/>
    <property type="project" value="UniProtKB-EC"/>
</dbReference>
<dbReference type="GO" id="GO:0030655">
    <property type="term" value="P:beta-lactam antibiotic catabolic process"/>
    <property type="evidence" value="ECO:0007669"/>
    <property type="project" value="InterPro"/>
</dbReference>
<dbReference type="GO" id="GO:0046677">
    <property type="term" value="P:response to antibiotic"/>
    <property type="evidence" value="ECO:0007669"/>
    <property type="project" value="UniProtKB-KW"/>
</dbReference>
<dbReference type="Gene3D" id="3.40.710.10">
    <property type="entry name" value="DD-peptidase/beta-lactamase superfamily"/>
    <property type="match status" value="1"/>
</dbReference>
<dbReference type="InterPro" id="IPR012338">
    <property type="entry name" value="Beta-lactam/transpept-like"/>
</dbReference>
<dbReference type="InterPro" id="IPR045155">
    <property type="entry name" value="Beta-lactam_cat"/>
</dbReference>
<dbReference type="InterPro" id="IPR000871">
    <property type="entry name" value="Beta-lactam_class-A"/>
</dbReference>
<dbReference type="InterPro" id="IPR023650">
    <property type="entry name" value="Beta-lactam_class-A_AS"/>
</dbReference>
<dbReference type="NCBIfam" id="NF033103">
    <property type="entry name" value="bla_class_A"/>
    <property type="match status" value="1"/>
</dbReference>
<dbReference type="NCBIfam" id="NF033089">
    <property type="entry name" value="blaCTX-M"/>
    <property type="match status" value="1"/>
</dbReference>
<dbReference type="PANTHER" id="PTHR35333">
    <property type="entry name" value="BETA-LACTAMASE"/>
    <property type="match status" value="1"/>
</dbReference>
<dbReference type="PANTHER" id="PTHR35333:SF3">
    <property type="entry name" value="BETA-LACTAMASE-TYPE TRANSPEPTIDASE FOLD CONTAINING PROTEIN"/>
    <property type="match status" value="1"/>
</dbReference>
<dbReference type="Pfam" id="PF13354">
    <property type="entry name" value="Beta-lactamase2"/>
    <property type="match status" value="1"/>
</dbReference>
<dbReference type="PRINTS" id="PR00118">
    <property type="entry name" value="BLACTAMASEA"/>
</dbReference>
<dbReference type="SUPFAM" id="SSF56601">
    <property type="entry name" value="beta-lactamase/transpeptidase-like"/>
    <property type="match status" value="1"/>
</dbReference>
<dbReference type="PROSITE" id="PS00146">
    <property type="entry name" value="BETA_LACTAMASE_A"/>
    <property type="match status" value="1"/>
</dbReference>
<organism evidence="9">
    <name type="scientific">Escherichia coli</name>
    <dbReference type="NCBI Taxonomy" id="562"/>
    <lineage>
        <taxon>Bacteria</taxon>
        <taxon>Pseudomonadati</taxon>
        <taxon>Pseudomonadota</taxon>
        <taxon>Gammaproteobacteria</taxon>
        <taxon>Enterobacterales</taxon>
        <taxon>Enterobacteriaceae</taxon>
        <taxon>Escherichia</taxon>
    </lineage>
</organism>
<accession>Q8KSA6</accession>
<proteinExistence type="evidence at protein level"/>
<sequence>MMRKSVRRAMLMTTACVSLLLASVPLCAQANDVQQKLAALEKSSGGRLGVALINTADNTQTLYRADERFAMCSTSKVMAVAAVLKQSETQKGLLSQRVEIKPSDLINYNPIAEKHVNGTMTFGELSAAALQYSDNTAMNKLIAHLGGPDKVTAFARTIGDDTFRLDRTEPTLNTAIPGDPRDTTTPLAMAQALRNLTLGNALGDTQRAQLVMWLKGNTTGAASIQAGLPTSWVVGDKTGSGGYGTTNDIAVIWPEGRAPLVLVTYFTQSEPKAESRRDVLAAAARIVTDGY</sequence>